<reference key="1">
    <citation type="submission" date="2008-02" db="EMBL/GenBank/DDBJ databases">
        <title>Complete sequence of Escherichia coli C str. ATCC 8739.</title>
        <authorList>
            <person name="Copeland A."/>
            <person name="Lucas S."/>
            <person name="Lapidus A."/>
            <person name="Glavina del Rio T."/>
            <person name="Dalin E."/>
            <person name="Tice H."/>
            <person name="Bruce D."/>
            <person name="Goodwin L."/>
            <person name="Pitluck S."/>
            <person name="Kiss H."/>
            <person name="Brettin T."/>
            <person name="Detter J.C."/>
            <person name="Han C."/>
            <person name="Kuske C.R."/>
            <person name="Schmutz J."/>
            <person name="Larimer F."/>
            <person name="Land M."/>
            <person name="Hauser L."/>
            <person name="Kyrpides N."/>
            <person name="Mikhailova N."/>
            <person name="Ingram L."/>
            <person name="Richardson P."/>
        </authorList>
    </citation>
    <scope>NUCLEOTIDE SEQUENCE [LARGE SCALE GENOMIC DNA]</scope>
    <source>
        <strain>ATCC 8739 / DSM 1576 / NBRC 3972 / NCIMB 8545 / WDCM 00012 / Crooks</strain>
    </source>
</reference>
<feature type="chain" id="PRO_1000080869" description="Thiazole synthase">
    <location>
        <begin position="1"/>
        <end position="256"/>
    </location>
</feature>
<feature type="active site" description="Schiff-base intermediate with DXP" evidence="1">
    <location>
        <position position="95"/>
    </location>
</feature>
<feature type="binding site" evidence="1">
    <location>
        <position position="156"/>
    </location>
    <ligand>
        <name>1-deoxy-D-xylulose 5-phosphate</name>
        <dbReference type="ChEBI" id="CHEBI:57792"/>
    </ligand>
</feature>
<feature type="binding site" evidence="1">
    <location>
        <begin position="182"/>
        <end position="183"/>
    </location>
    <ligand>
        <name>1-deoxy-D-xylulose 5-phosphate</name>
        <dbReference type="ChEBI" id="CHEBI:57792"/>
    </ligand>
</feature>
<feature type="binding site" evidence="1">
    <location>
        <begin position="204"/>
        <end position="205"/>
    </location>
    <ligand>
        <name>1-deoxy-D-xylulose 5-phosphate</name>
        <dbReference type="ChEBI" id="CHEBI:57792"/>
    </ligand>
</feature>
<protein>
    <recommendedName>
        <fullName evidence="1">Thiazole synthase</fullName>
        <ecNumber evidence="1">2.8.1.10</ecNumber>
    </recommendedName>
</protein>
<name>THIG_ECOLC</name>
<dbReference type="EC" id="2.8.1.10" evidence="1"/>
<dbReference type="EMBL" id="CP000946">
    <property type="protein sequence ID" value="ACA79634.1"/>
    <property type="molecule type" value="Genomic_DNA"/>
</dbReference>
<dbReference type="RefSeq" id="WP_000944104.1">
    <property type="nucleotide sequence ID" value="NZ_MTFT01000025.1"/>
</dbReference>
<dbReference type="SMR" id="B1IUQ7"/>
<dbReference type="KEGG" id="ecl:EcolC_4035"/>
<dbReference type="HOGENOM" id="CLU_062233_1_0_6"/>
<dbReference type="UniPathway" id="UPA00060"/>
<dbReference type="GO" id="GO:0005737">
    <property type="term" value="C:cytoplasm"/>
    <property type="evidence" value="ECO:0007669"/>
    <property type="project" value="UniProtKB-SubCell"/>
</dbReference>
<dbReference type="GO" id="GO:1990107">
    <property type="term" value="F:thiazole synthase activity"/>
    <property type="evidence" value="ECO:0007669"/>
    <property type="project" value="UniProtKB-EC"/>
</dbReference>
<dbReference type="GO" id="GO:0009229">
    <property type="term" value="P:thiamine diphosphate biosynthetic process"/>
    <property type="evidence" value="ECO:0007669"/>
    <property type="project" value="UniProtKB-UniRule"/>
</dbReference>
<dbReference type="CDD" id="cd04728">
    <property type="entry name" value="ThiG"/>
    <property type="match status" value="1"/>
</dbReference>
<dbReference type="FunFam" id="3.20.20.70:FF:000049">
    <property type="entry name" value="Thiazole synthase"/>
    <property type="match status" value="1"/>
</dbReference>
<dbReference type="Gene3D" id="3.20.20.70">
    <property type="entry name" value="Aldolase class I"/>
    <property type="match status" value="1"/>
</dbReference>
<dbReference type="HAMAP" id="MF_00443">
    <property type="entry name" value="ThiG"/>
    <property type="match status" value="1"/>
</dbReference>
<dbReference type="InterPro" id="IPR013785">
    <property type="entry name" value="Aldolase_TIM"/>
</dbReference>
<dbReference type="InterPro" id="IPR033983">
    <property type="entry name" value="Thiazole_synthase_ThiG"/>
</dbReference>
<dbReference type="InterPro" id="IPR008867">
    <property type="entry name" value="ThiG"/>
</dbReference>
<dbReference type="PANTHER" id="PTHR34266">
    <property type="entry name" value="THIAZOLE SYNTHASE"/>
    <property type="match status" value="1"/>
</dbReference>
<dbReference type="PANTHER" id="PTHR34266:SF2">
    <property type="entry name" value="THIAZOLE SYNTHASE"/>
    <property type="match status" value="1"/>
</dbReference>
<dbReference type="Pfam" id="PF05690">
    <property type="entry name" value="ThiG"/>
    <property type="match status" value="1"/>
</dbReference>
<dbReference type="SUPFAM" id="SSF110399">
    <property type="entry name" value="ThiG-like"/>
    <property type="match status" value="1"/>
</dbReference>
<keyword id="KW-0963">Cytoplasm</keyword>
<keyword id="KW-0704">Schiff base</keyword>
<keyword id="KW-0784">Thiamine biosynthesis</keyword>
<keyword id="KW-0808">Transferase</keyword>
<sequence>MLRIADKTFDSHLFTGTGKFASSQLMVEAIRASGSQLVTLAMKRVDLRQHNDAILEPLIAAGVTLLPNTSGAKTAEEAIFAAHLAREALGTNWLKLEIHPDARWLLPDPIETLKAAETLVQQGFVVLPYCGADPVLCKRLEEVGCAAVMPLGAPIGSNQGLETRAMLEIIIQQATVPVVVDAGIGVPSHAAQALEMGADAVLVNTAIAVADDPVNMAKAFRLAVEAGLLARQSGPGSRSYFAHATSPLTGFLEASA</sequence>
<proteinExistence type="inferred from homology"/>
<evidence type="ECO:0000255" key="1">
    <source>
        <dbReference type="HAMAP-Rule" id="MF_00443"/>
    </source>
</evidence>
<comment type="function">
    <text evidence="1">Catalyzes the rearrangement of 1-deoxy-D-xylulose 5-phosphate (DXP) to produce the thiazole phosphate moiety of thiamine. Sulfur is provided by the thiocarboxylate moiety of the carrier protein ThiS. In vitro, sulfur can be provided by H(2)S.</text>
</comment>
<comment type="catalytic activity">
    <reaction evidence="1">
        <text>[ThiS sulfur-carrier protein]-C-terminal-Gly-aminoethanethioate + 2-iminoacetate + 1-deoxy-D-xylulose 5-phosphate = [ThiS sulfur-carrier protein]-C-terminal Gly-Gly + 2-[(2R,5Z)-2-carboxy-4-methylthiazol-5(2H)-ylidene]ethyl phosphate + 2 H2O + H(+)</text>
        <dbReference type="Rhea" id="RHEA:26297"/>
        <dbReference type="Rhea" id="RHEA-COMP:12909"/>
        <dbReference type="Rhea" id="RHEA-COMP:19908"/>
        <dbReference type="ChEBI" id="CHEBI:15377"/>
        <dbReference type="ChEBI" id="CHEBI:15378"/>
        <dbReference type="ChEBI" id="CHEBI:57792"/>
        <dbReference type="ChEBI" id="CHEBI:62899"/>
        <dbReference type="ChEBI" id="CHEBI:77846"/>
        <dbReference type="ChEBI" id="CHEBI:90778"/>
        <dbReference type="ChEBI" id="CHEBI:232372"/>
        <dbReference type="EC" id="2.8.1.10"/>
    </reaction>
</comment>
<comment type="pathway">
    <text evidence="1">Cofactor biosynthesis; thiamine diphosphate biosynthesis.</text>
</comment>
<comment type="subunit">
    <text evidence="1">Homotetramer. Forms heterodimers with either ThiH or ThiS.</text>
</comment>
<comment type="subcellular location">
    <subcellularLocation>
        <location evidence="1">Cytoplasm</location>
    </subcellularLocation>
</comment>
<comment type="similarity">
    <text evidence="1">Belongs to the ThiG family.</text>
</comment>
<organism>
    <name type="scientific">Escherichia coli (strain ATCC 8739 / DSM 1576 / NBRC 3972 / NCIMB 8545 / WDCM 00012 / Crooks)</name>
    <dbReference type="NCBI Taxonomy" id="481805"/>
    <lineage>
        <taxon>Bacteria</taxon>
        <taxon>Pseudomonadati</taxon>
        <taxon>Pseudomonadota</taxon>
        <taxon>Gammaproteobacteria</taxon>
        <taxon>Enterobacterales</taxon>
        <taxon>Enterobacteriaceae</taxon>
        <taxon>Escherichia</taxon>
    </lineage>
</organism>
<gene>
    <name evidence="1" type="primary">thiG</name>
    <name type="ordered locus">EcolC_4035</name>
</gene>
<accession>B1IUQ7</accession>